<proteinExistence type="evidence at protein level"/>
<protein>
    <recommendedName>
        <fullName>Grammistin Pp 4b</fullName>
    </recommendedName>
</protein>
<feature type="peptide" id="PRO_0000044521" description="Grammistin Pp 4b">
    <location>
        <begin position="1"/>
        <end position="24"/>
    </location>
</feature>
<organism>
    <name type="scientific">Pogonoperca punctata</name>
    <name type="common">Clown grouper</name>
    <name type="synonym">Grammistes punctatus</name>
    <dbReference type="NCBI Taxonomy" id="160738"/>
    <lineage>
        <taxon>Eukaryota</taxon>
        <taxon>Metazoa</taxon>
        <taxon>Chordata</taxon>
        <taxon>Craniata</taxon>
        <taxon>Vertebrata</taxon>
        <taxon>Euteleostomi</taxon>
        <taxon>Actinopterygii</taxon>
        <taxon>Neopterygii</taxon>
        <taxon>Teleostei</taxon>
        <taxon>Neoteleostei</taxon>
        <taxon>Acanthomorphata</taxon>
        <taxon>Eupercaria</taxon>
        <taxon>Perciformes</taxon>
        <taxon>Serranoidei</taxon>
        <taxon>Serranidae</taxon>
        <taxon>Epinephelinae</taxon>
        <taxon>Grammistini</taxon>
        <taxon>Pogonoperca</taxon>
    </lineage>
</organism>
<evidence type="ECO:0000250" key="1"/>
<evidence type="ECO:0000269" key="2">
    <source ref="1"/>
</evidence>
<evidence type="ECO:0000305" key="3"/>
<sequence>LFGFLIPLLPHLIGAIPQVIGAIR</sequence>
<reference key="1">
    <citation type="journal article" date="2001" name="Fish. Sci.">
        <title>Primary and secondary structures of grammistins, peptide toxins isolated from the skin secretion of the soapfish Pogonoperca punctata.</title>
        <authorList>
            <person name="Shiomi K."/>
            <person name="Yokota H."/>
            <person name="Nagashima Y."/>
            <person name="Ishida M."/>
        </authorList>
    </citation>
    <scope>PROTEIN SEQUENCE</scope>
    <scope>MASS SPECTROMETRY</scope>
    <source>
        <tissue>Skin secretion</tissue>
    </source>
</reference>
<keyword id="KW-0044">Antibiotic</keyword>
<keyword id="KW-0929">Antimicrobial</keyword>
<keyword id="KW-0204">Cytolysis</keyword>
<keyword id="KW-0903">Direct protein sequencing</keyword>
<keyword id="KW-0354">Hemolysis</keyword>
<keyword id="KW-0964">Secreted</keyword>
<keyword id="KW-0800">Toxin</keyword>
<comment type="function">
    <text evidence="1">Thanks to its abundant amphiphilic alpha-helices, it may integrate into membrane phospholipids, leading to lysis of the membrane. Its hemolytic activity is inhibited by phospholipids, but not by cholesterol. Has antibacterial activity with a broad spectrum against various species of bacteria including both Gram-positive and Gram-negative groups. Also has ichthyotoxic activity (By similarity).</text>
</comment>
<comment type="subunit">
    <text evidence="3">Exists as aggregates of 3-4 molecules.</text>
</comment>
<comment type="subcellular location">
    <subcellularLocation>
        <location>Secreted</location>
    </subcellularLocation>
</comment>
<comment type="tissue specificity">
    <text>Expressed by the skin glands.</text>
</comment>
<comment type="mass spectrometry"/>
<comment type="similarity">
    <text evidence="3">Belongs to the grammistin family. Group 1 subfamily.</text>
</comment>
<dbReference type="GO" id="GO:0005576">
    <property type="term" value="C:extracellular region"/>
    <property type="evidence" value="ECO:0007669"/>
    <property type="project" value="UniProtKB-SubCell"/>
</dbReference>
<dbReference type="GO" id="GO:0090729">
    <property type="term" value="F:toxin activity"/>
    <property type="evidence" value="ECO:0007669"/>
    <property type="project" value="UniProtKB-KW"/>
</dbReference>
<dbReference type="GO" id="GO:0042742">
    <property type="term" value="P:defense response to bacterium"/>
    <property type="evidence" value="ECO:0007669"/>
    <property type="project" value="UniProtKB-KW"/>
</dbReference>
<dbReference type="GO" id="GO:0031640">
    <property type="term" value="P:killing of cells of another organism"/>
    <property type="evidence" value="ECO:0007669"/>
    <property type="project" value="UniProtKB-KW"/>
</dbReference>
<name>GRA4B_POGPU</name>
<accession>P69838</accession>